<keyword id="KW-0131">Cell cycle</keyword>
<keyword id="KW-0132">Cell division</keyword>
<keyword id="KW-0143">Chaperone</keyword>
<keyword id="KW-0963">Cytoplasm</keyword>
<keyword id="KW-0413">Isomerase</keyword>
<keyword id="KW-0697">Rotamase</keyword>
<organism>
    <name type="scientific">Haemophilus influenzae (strain 86-028NP)</name>
    <dbReference type="NCBI Taxonomy" id="281310"/>
    <lineage>
        <taxon>Bacteria</taxon>
        <taxon>Pseudomonadati</taxon>
        <taxon>Pseudomonadota</taxon>
        <taxon>Gammaproteobacteria</taxon>
        <taxon>Pasteurellales</taxon>
        <taxon>Pasteurellaceae</taxon>
        <taxon>Haemophilus</taxon>
    </lineage>
</organism>
<evidence type="ECO:0000255" key="1">
    <source>
        <dbReference type="HAMAP-Rule" id="MF_00303"/>
    </source>
</evidence>
<accession>Q4QMK6</accession>
<proteinExistence type="inferred from homology"/>
<comment type="function">
    <text evidence="1">Involved in protein export. Acts as a chaperone by maintaining the newly synthesized protein in an open conformation. Functions as a peptidyl-prolyl cis-trans isomerase.</text>
</comment>
<comment type="catalytic activity">
    <reaction evidence="1">
        <text>[protein]-peptidylproline (omega=180) = [protein]-peptidylproline (omega=0)</text>
        <dbReference type="Rhea" id="RHEA:16237"/>
        <dbReference type="Rhea" id="RHEA-COMP:10747"/>
        <dbReference type="Rhea" id="RHEA-COMP:10748"/>
        <dbReference type="ChEBI" id="CHEBI:83833"/>
        <dbReference type="ChEBI" id="CHEBI:83834"/>
        <dbReference type="EC" id="5.2.1.8"/>
    </reaction>
</comment>
<comment type="subcellular location">
    <subcellularLocation>
        <location>Cytoplasm</location>
    </subcellularLocation>
    <text evidence="1">About half TF is bound to the ribosome near the polypeptide exit tunnel while the other half is free in the cytoplasm.</text>
</comment>
<comment type="domain">
    <text evidence="1">Consists of 3 domains; the N-terminus binds the ribosome, the middle domain has PPIase activity, while the C-terminus has intrinsic chaperone activity on its own.</text>
</comment>
<comment type="similarity">
    <text evidence="1">Belongs to the FKBP-type PPIase family. Tig subfamily.</text>
</comment>
<gene>
    <name evidence="1" type="primary">tig</name>
    <name type="ordered locus">NTHI0843</name>
</gene>
<dbReference type="EC" id="5.2.1.8" evidence="1"/>
<dbReference type="EMBL" id="CP000057">
    <property type="protein sequence ID" value="AAX87741.1"/>
    <property type="molecule type" value="Genomic_DNA"/>
</dbReference>
<dbReference type="RefSeq" id="WP_006995277.1">
    <property type="nucleotide sequence ID" value="NC_007146.2"/>
</dbReference>
<dbReference type="SMR" id="Q4QMK6"/>
<dbReference type="GeneID" id="93219713"/>
<dbReference type="KEGG" id="hit:NTHI0843"/>
<dbReference type="HOGENOM" id="CLU_033058_2_0_6"/>
<dbReference type="Proteomes" id="UP000002525">
    <property type="component" value="Chromosome"/>
</dbReference>
<dbReference type="GO" id="GO:0005737">
    <property type="term" value="C:cytoplasm"/>
    <property type="evidence" value="ECO:0007669"/>
    <property type="project" value="UniProtKB-SubCell"/>
</dbReference>
<dbReference type="GO" id="GO:0003755">
    <property type="term" value="F:peptidyl-prolyl cis-trans isomerase activity"/>
    <property type="evidence" value="ECO:0007669"/>
    <property type="project" value="UniProtKB-UniRule"/>
</dbReference>
<dbReference type="GO" id="GO:0044183">
    <property type="term" value="F:protein folding chaperone"/>
    <property type="evidence" value="ECO:0007669"/>
    <property type="project" value="TreeGrafter"/>
</dbReference>
<dbReference type="GO" id="GO:0043022">
    <property type="term" value="F:ribosome binding"/>
    <property type="evidence" value="ECO:0007669"/>
    <property type="project" value="TreeGrafter"/>
</dbReference>
<dbReference type="GO" id="GO:0051083">
    <property type="term" value="P:'de novo' cotranslational protein folding"/>
    <property type="evidence" value="ECO:0007669"/>
    <property type="project" value="TreeGrafter"/>
</dbReference>
<dbReference type="GO" id="GO:0051301">
    <property type="term" value="P:cell division"/>
    <property type="evidence" value="ECO:0007669"/>
    <property type="project" value="UniProtKB-KW"/>
</dbReference>
<dbReference type="GO" id="GO:0061077">
    <property type="term" value="P:chaperone-mediated protein folding"/>
    <property type="evidence" value="ECO:0007669"/>
    <property type="project" value="TreeGrafter"/>
</dbReference>
<dbReference type="GO" id="GO:0015031">
    <property type="term" value="P:protein transport"/>
    <property type="evidence" value="ECO:0007669"/>
    <property type="project" value="UniProtKB-UniRule"/>
</dbReference>
<dbReference type="GO" id="GO:0043335">
    <property type="term" value="P:protein unfolding"/>
    <property type="evidence" value="ECO:0007669"/>
    <property type="project" value="TreeGrafter"/>
</dbReference>
<dbReference type="FunFam" id="3.10.50.40:FF:000001">
    <property type="entry name" value="Trigger factor"/>
    <property type="match status" value="1"/>
</dbReference>
<dbReference type="Gene3D" id="3.10.50.40">
    <property type="match status" value="1"/>
</dbReference>
<dbReference type="Gene3D" id="3.30.70.1050">
    <property type="entry name" value="Trigger factor ribosome-binding domain"/>
    <property type="match status" value="1"/>
</dbReference>
<dbReference type="Gene3D" id="1.10.3120.10">
    <property type="entry name" value="Trigger factor, C-terminal domain"/>
    <property type="match status" value="1"/>
</dbReference>
<dbReference type="HAMAP" id="MF_00303">
    <property type="entry name" value="Trigger_factor_Tig"/>
    <property type="match status" value="1"/>
</dbReference>
<dbReference type="InterPro" id="IPR046357">
    <property type="entry name" value="PPIase_dom_sf"/>
</dbReference>
<dbReference type="InterPro" id="IPR001179">
    <property type="entry name" value="PPIase_FKBP_dom"/>
</dbReference>
<dbReference type="InterPro" id="IPR005215">
    <property type="entry name" value="Trig_fac"/>
</dbReference>
<dbReference type="InterPro" id="IPR008880">
    <property type="entry name" value="Trigger_fac_C"/>
</dbReference>
<dbReference type="InterPro" id="IPR037041">
    <property type="entry name" value="Trigger_fac_C_sf"/>
</dbReference>
<dbReference type="InterPro" id="IPR008881">
    <property type="entry name" value="Trigger_fac_ribosome-bd_bac"/>
</dbReference>
<dbReference type="InterPro" id="IPR036611">
    <property type="entry name" value="Trigger_fac_ribosome-bd_sf"/>
</dbReference>
<dbReference type="InterPro" id="IPR027304">
    <property type="entry name" value="Trigger_fact/SurA_dom_sf"/>
</dbReference>
<dbReference type="NCBIfam" id="TIGR00115">
    <property type="entry name" value="tig"/>
    <property type="match status" value="1"/>
</dbReference>
<dbReference type="PANTHER" id="PTHR30560">
    <property type="entry name" value="TRIGGER FACTOR CHAPERONE AND PEPTIDYL-PROLYL CIS/TRANS ISOMERASE"/>
    <property type="match status" value="1"/>
</dbReference>
<dbReference type="PANTHER" id="PTHR30560:SF3">
    <property type="entry name" value="TRIGGER FACTOR-LIKE PROTEIN TIG, CHLOROPLASTIC"/>
    <property type="match status" value="1"/>
</dbReference>
<dbReference type="Pfam" id="PF00254">
    <property type="entry name" value="FKBP_C"/>
    <property type="match status" value="1"/>
</dbReference>
<dbReference type="Pfam" id="PF05698">
    <property type="entry name" value="Trigger_C"/>
    <property type="match status" value="1"/>
</dbReference>
<dbReference type="Pfam" id="PF05697">
    <property type="entry name" value="Trigger_N"/>
    <property type="match status" value="1"/>
</dbReference>
<dbReference type="PIRSF" id="PIRSF003095">
    <property type="entry name" value="Trigger_factor"/>
    <property type="match status" value="1"/>
</dbReference>
<dbReference type="SUPFAM" id="SSF54534">
    <property type="entry name" value="FKBP-like"/>
    <property type="match status" value="1"/>
</dbReference>
<dbReference type="SUPFAM" id="SSF109998">
    <property type="entry name" value="Triger factor/SurA peptide-binding domain-like"/>
    <property type="match status" value="1"/>
</dbReference>
<dbReference type="SUPFAM" id="SSF102735">
    <property type="entry name" value="Trigger factor ribosome-binding domain"/>
    <property type="match status" value="1"/>
</dbReference>
<dbReference type="PROSITE" id="PS50059">
    <property type="entry name" value="FKBP_PPIASE"/>
    <property type="match status" value="1"/>
</dbReference>
<protein>
    <recommendedName>
        <fullName evidence="1">Trigger factor</fullName>
        <shortName evidence="1">TF</shortName>
        <ecNumber evidence="1">5.2.1.8</ecNumber>
    </recommendedName>
    <alternativeName>
        <fullName evidence="1">PPIase</fullName>
    </alternativeName>
</protein>
<sequence>MSLNIETTQGLERRVAITVPTEIVSKAVREEFKRAAKNVRVDGFRKGHVPAHIIEQRFGASIRQDVLNDLLPRHFFDAVIAEKINIAGRPTFAIETFEEGKDLVFTATFEVYPEVKLQGLENIKVEKPTVEITEADIDKMIDVLRKQQATWAESQDVVKADDRVTIDFVGSVDGEEFEGGKATDFVLFMGQGRMIPGFEEGIVGHKAGEQFDIDVTFPAEYHAENLKGKAAKFAITLKKIENMVLPELTDEFVAKFGPNTKSVADLRAEIRKNMERELKNALVSRVKQQVINGLIEQNPIDVPASAVEEEINVLRNQAAQRFGGNAQQTAQLPRELFEAEATRRVQVGLLFSEVIKSNELKADEERAKAMIADIASAYEQPAEVVEYYSKNEELMNNIRNVVLEEQAVDAVLAKAQVTEKVSSFDEIMNPQA</sequence>
<feature type="chain" id="PRO_0000256563" description="Trigger factor">
    <location>
        <begin position="1"/>
        <end position="432"/>
    </location>
</feature>
<feature type="domain" description="PPIase FKBP-type" evidence="1">
    <location>
        <begin position="161"/>
        <end position="246"/>
    </location>
</feature>
<reference key="1">
    <citation type="journal article" date="2005" name="J. Bacteriol.">
        <title>Genomic sequence of an otitis media isolate of nontypeable Haemophilus influenzae: comparative study with H. influenzae serotype d, strain KW20.</title>
        <authorList>
            <person name="Harrison A."/>
            <person name="Dyer D.W."/>
            <person name="Gillaspy A."/>
            <person name="Ray W.C."/>
            <person name="Mungur R."/>
            <person name="Carson M.B."/>
            <person name="Zhong H."/>
            <person name="Gipson J."/>
            <person name="Gipson M."/>
            <person name="Johnson L.S."/>
            <person name="Lewis L."/>
            <person name="Bakaletz L.O."/>
            <person name="Munson R.S. Jr."/>
        </authorList>
    </citation>
    <scope>NUCLEOTIDE SEQUENCE [LARGE SCALE GENOMIC DNA]</scope>
    <source>
        <strain>86-028NP</strain>
    </source>
</reference>
<name>TIG_HAEI8</name>